<proteinExistence type="inferred from homology"/>
<comment type="function">
    <text evidence="1">ATP-dependent DNA 3'-5' helicase required for initiation of viral DNA replication. It forms a complex with the viral E2 protein. The E1-E2 complex binds to the replication origin which contains binding sites for both proteins. During the initial step, a dimer of E1 interacts with a dimer of protein E2 leading to a complex that binds the viral origin of replication with high specificity. Then, a second dimer of E1 displaces the E2 dimer in an ATP-dependent manner to form the E1 tetramer. Following this, two E1 monomers are added to each half of the site, which results in the formation of two E1 trimers on the viral ori. Subsequently, two hexamers will be created. The double hexamer acts as a bi-directional helicase machinery and unwinds the viral DNA and then recruits the host DNA polymerase to start replication.</text>
</comment>
<comment type="catalytic activity">
    <reaction evidence="1">
        <text>Couples ATP hydrolysis with the unwinding of duplex DNA by translocating in the 3'-5' direction.</text>
        <dbReference type="EC" id="5.6.2.4"/>
    </reaction>
</comment>
<comment type="catalytic activity">
    <reaction evidence="1">
        <text>ATP + H2O = ADP + phosphate + H(+)</text>
        <dbReference type="Rhea" id="RHEA:13065"/>
        <dbReference type="ChEBI" id="CHEBI:15377"/>
        <dbReference type="ChEBI" id="CHEBI:15378"/>
        <dbReference type="ChEBI" id="CHEBI:30616"/>
        <dbReference type="ChEBI" id="CHEBI:43474"/>
        <dbReference type="ChEBI" id="CHEBI:456216"/>
        <dbReference type="EC" id="5.6.2.4"/>
    </reaction>
</comment>
<comment type="subunit">
    <text evidence="1">Can form hexamers. Interacts with E2 protein; this interaction increases E1 DNA binding specificity. Interacts with host DNA polymerase subunit POLA2. Interacts with host single stranded DNA-binding protein RPA1. Interacts with host TOP1; this interaction stimulates the enzymatic activity of TOP1.</text>
</comment>
<comment type="subcellular location">
    <subcellularLocation>
        <location evidence="1">Host nucleus</location>
    </subcellularLocation>
</comment>
<comment type="PTM">
    <text evidence="1">Phosphorylated.</text>
</comment>
<comment type="PTM">
    <text evidence="1">Sumoylated.</text>
</comment>
<comment type="similarity">
    <text evidence="1">Belongs to the papillomaviridae E1 protein family.</text>
</comment>
<accession>Q05112</accession>
<sequence>MASPEGTDDEGGGCTGWFHVEAVVKKRTGDIISEDETEEDEGTASDLDGFLDNSNVITTQADRETAQQLLHAQNTYADTQTLHNLKRKYLGSPLGDISNQQFVCREGVKRRIIDTDVADSGYGNTLEVEATQQVQDNTYGSGKQQDGGSQTSVCSRENSIEADSDMDIGATPPQQIQELLKSSNVQAKLCYKFKELFGIPFSELVRTFKSDSTCCHDWICAMFGVNETLAEALKTIIKSQCMYYHIQCLTCTWGVVILMLIRYTCGKNRKTIIKSLSSIVNVPSEQMLVQPPKIRSPAVALYFYKTAMSNISDIYGETPEWIQRQTQIQHSFQDCQFELSKMVQWAFDNDVTDDSDIAFYYAQLADVDSNAQAFLKSNMQAKYVKDCGIMCRHYKRAQQQQMNMKQWITHICSKVDEGGDWRPIVQFLRYQGVDFISFLSYFKLFLRGTPKHNCLVLYGPPNTGKSCFAMSLIQFFQGSVISYVNSHSHFWLQPLDNAKLGMLDDATDACWRYIDEYMRNLLDGNPVSLDRKHKQLVQIKCPPVIITTNINPLHDAKLQYLHSRIHVVPFLNPFPIDTNGNPVYQLNNVNWKCFFERTWSRLDLNNDEDKENHGDSMPTFRCVPGENSRLF</sequence>
<feature type="chain" id="PRO_0000133128" description="Replication protein E1">
    <location>
        <begin position="1"/>
        <end position="631"/>
    </location>
</feature>
<feature type="domain" description="SF3 helicase" evidence="1">
    <location>
        <begin position="433"/>
        <end position="583"/>
    </location>
</feature>
<feature type="region of interest" description="Disordered" evidence="2">
    <location>
        <begin position="28"/>
        <end position="48"/>
    </location>
</feature>
<feature type="region of interest" description="DNA-binding region" evidence="1">
    <location>
        <begin position="168"/>
        <end position="334"/>
    </location>
</feature>
<feature type="short sequence motif" description="Nuclear localization signal" evidence="1">
    <location>
        <begin position="86"/>
        <end position="88"/>
    </location>
</feature>
<feature type="compositionally biased region" description="Acidic residues" evidence="2">
    <location>
        <begin position="32"/>
        <end position="43"/>
    </location>
</feature>
<feature type="binding site" evidence="1">
    <location>
        <begin position="459"/>
        <end position="466"/>
    </location>
    <ligand>
        <name>ATP</name>
        <dbReference type="ChEBI" id="CHEBI:30616"/>
    </ligand>
</feature>
<feature type="modified residue" description="Phosphoserine; by host" evidence="1">
    <location>
        <position position="92"/>
    </location>
</feature>
<feature type="cross-link" description="Glycyl lysine isopeptide (Lys-Gly) (interchain with G-Cter in SUMO)" evidence="1">
    <location>
        <position position="540"/>
    </location>
</feature>
<protein>
    <recommendedName>
        <fullName evidence="1">Replication protein E1</fullName>
        <ecNumber evidence="1">5.6.2.4</ecNumber>
    </recommendedName>
    <alternativeName>
        <fullName evidence="1">ATP-dependent helicase E1</fullName>
    </alternativeName>
    <alternativeName>
        <fullName evidence="1">DNA 3'-5' helicase E1</fullName>
    </alternativeName>
</protein>
<gene>
    <name evidence="1" type="primary">E1</name>
</gene>
<organismHost>
    <name type="scientific">Homo sapiens</name>
    <name type="common">Human</name>
    <dbReference type="NCBI Taxonomy" id="9606"/>
</organismHost>
<keyword id="KW-0067">ATP-binding</keyword>
<keyword id="KW-0235">DNA replication</keyword>
<keyword id="KW-0238">DNA-binding</keyword>
<keyword id="KW-0244">Early protein</keyword>
<keyword id="KW-0347">Helicase</keyword>
<keyword id="KW-1048">Host nucleus</keyword>
<keyword id="KW-0378">Hydrolase</keyword>
<keyword id="KW-0413">Isomerase</keyword>
<keyword id="KW-1017">Isopeptide bond</keyword>
<keyword id="KW-0547">Nucleotide-binding</keyword>
<keyword id="KW-0597">Phosphoprotein</keyword>
<keyword id="KW-1185">Reference proteome</keyword>
<keyword id="KW-0832">Ubl conjugation</keyword>
<organism>
    <name type="scientific">Human papillomavirus 30</name>
    <dbReference type="NCBI Taxonomy" id="10611"/>
    <lineage>
        <taxon>Viruses</taxon>
        <taxon>Monodnaviria</taxon>
        <taxon>Shotokuvirae</taxon>
        <taxon>Cossaviricota</taxon>
        <taxon>Papovaviricetes</taxon>
        <taxon>Zurhausenvirales</taxon>
        <taxon>Papillomaviridae</taxon>
        <taxon>Firstpapillomavirinae</taxon>
        <taxon>Alphapapillomavirus</taxon>
        <taxon>Alphapapillomavirus 6</taxon>
    </lineage>
</organism>
<evidence type="ECO:0000255" key="1">
    <source>
        <dbReference type="HAMAP-Rule" id="MF_04000"/>
    </source>
</evidence>
<evidence type="ECO:0000256" key="2">
    <source>
        <dbReference type="SAM" id="MobiDB-lite"/>
    </source>
</evidence>
<name>VE1_HPV30</name>
<reference key="1">
    <citation type="journal article" date="1994" name="Curr. Top. Microbiol. Immunol.">
        <title>Primer-directed sequencing of human papillomavirus types.</title>
        <authorList>
            <person name="Delius H."/>
            <person name="Hofmann B."/>
        </authorList>
    </citation>
    <scope>NUCLEOTIDE SEQUENCE [GENOMIC DNA]</scope>
</reference>
<reference key="2">
    <citation type="journal article" date="1992" name="J. Virol.">
        <title>Phylogenetic analysis of 48 papillomavirus types and 28 subtypes and variants: a showcase for the molecular evolution of DNA viruses.</title>
        <authorList>
            <person name="Chan S.-Y."/>
            <person name="Bernard H.U."/>
            <person name="Ong C.K."/>
            <person name="Chan S.P."/>
            <person name="Birgit H."/>
            <person name="Delius H."/>
        </authorList>
    </citation>
    <scope>NUCLEOTIDE SEQUENCE [GENOMIC DNA] OF 358-409</scope>
</reference>
<dbReference type="EC" id="5.6.2.4" evidence="1"/>
<dbReference type="EMBL" id="X74474">
    <property type="protein sequence ID" value="CAA52545.1"/>
    <property type="molecule type" value="Genomic_DNA"/>
</dbReference>
<dbReference type="EMBL" id="M96304">
    <property type="protein sequence ID" value="AAA46993.1"/>
    <property type="molecule type" value="Genomic_DNA"/>
</dbReference>
<dbReference type="PIR" id="S36505">
    <property type="entry name" value="S36505"/>
</dbReference>
<dbReference type="RefSeq" id="YP_009508156.1">
    <property type="nucleotide sequence ID" value="NC_038889.1"/>
</dbReference>
<dbReference type="SMR" id="Q05112"/>
<dbReference type="GeneID" id="37619471"/>
<dbReference type="OrthoDB" id="4795at10239"/>
<dbReference type="Proteomes" id="UP000009155">
    <property type="component" value="Genome"/>
</dbReference>
<dbReference type="GO" id="GO:0042025">
    <property type="term" value="C:host cell nucleus"/>
    <property type="evidence" value="ECO:0007669"/>
    <property type="project" value="UniProtKB-SubCell"/>
</dbReference>
<dbReference type="GO" id="GO:0005524">
    <property type="term" value="F:ATP binding"/>
    <property type="evidence" value="ECO:0007669"/>
    <property type="project" value="UniProtKB-UniRule"/>
</dbReference>
<dbReference type="GO" id="GO:0016887">
    <property type="term" value="F:ATP hydrolysis activity"/>
    <property type="evidence" value="ECO:0007669"/>
    <property type="project" value="RHEA"/>
</dbReference>
<dbReference type="GO" id="GO:0003677">
    <property type="term" value="F:DNA binding"/>
    <property type="evidence" value="ECO:0007669"/>
    <property type="project" value="UniProtKB-UniRule"/>
</dbReference>
<dbReference type="GO" id="GO:0003678">
    <property type="term" value="F:DNA helicase activity"/>
    <property type="evidence" value="ECO:0007669"/>
    <property type="project" value="UniProtKB-UniRule"/>
</dbReference>
<dbReference type="GO" id="GO:0006260">
    <property type="term" value="P:DNA replication"/>
    <property type="evidence" value="ECO:0007669"/>
    <property type="project" value="UniProtKB-UniRule"/>
</dbReference>
<dbReference type="Gene3D" id="3.40.1310.10">
    <property type="match status" value="1"/>
</dbReference>
<dbReference type="Gene3D" id="3.40.50.300">
    <property type="entry name" value="P-loop containing nucleotide triphosphate hydrolases"/>
    <property type="match status" value="1"/>
</dbReference>
<dbReference type="Gene3D" id="1.10.10.510">
    <property type="entry name" value="Zinc finger, large T-antigen D1 domain"/>
    <property type="match status" value="1"/>
</dbReference>
<dbReference type="HAMAP" id="MF_04000">
    <property type="entry name" value="PPV_E1"/>
    <property type="match status" value="1"/>
</dbReference>
<dbReference type="InterPro" id="IPR014015">
    <property type="entry name" value="Helicase_SF3_DNA-vir"/>
</dbReference>
<dbReference type="InterPro" id="IPR027417">
    <property type="entry name" value="P-loop_NTPase"/>
</dbReference>
<dbReference type="InterPro" id="IPR001177">
    <property type="entry name" value="PPV_DNA_helicase_E1_C"/>
</dbReference>
<dbReference type="InterPro" id="IPR014000">
    <property type="entry name" value="PPV_DNA_helicase_E1_N"/>
</dbReference>
<dbReference type="InterPro" id="IPR046832">
    <property type="entry name" value="PPV_E1_DBD"/>
</dbReference>
<dbReference type="InterPro" id="IPR046935">
    <property type="entry name" value="PPV_E1_DBD_sf"/>
</dbReference>
<dbReference type="InterPro" id="IPR016393">
    <property type="entry name" value="Rep_E1_papillomaV"/>
</dbReference>
<dbReference type="InterPro" id="IPR037102">
    <property type="entry name" value="Znf_lg_T-Ag_D1_dom_sf"/>
</dbReference>
<dbReference type="Pfam" id="PF00519">
    <property type="entry name" value="PPV_E1_C"/>
    <property type="match status" value="1"/>
</dbReference>
<dbReference type="Pfam" id="PF20450">
    <property type="entry name" value="PPV_E1_DBD"/>
    <property type="match status" value="1"/>
</dbReference>
<dbReference type="Pfam" id="PF00524">
    <property type="entry name" value="PPV_E1_N"/>
    <property type="match status" value="1"/>
</dbReference>
<dbReference type="PIRSF" id="PIRSF003383">
    <property type="entry name" value="Rep_E1_papillomaV"/>
    <property type="match status" value="1"/>
</dbReference>
<dbReference type="SUPFAM" id="SSF55464">
    <property type="entry name" value="Origin of replication-binding domain, RBD-like"/>
    <property type="match status" value="1"/>
</dbReference>
<dbReference type="SUPFAM" id="SSF52540">
    <property type="entry name" value="P-loop containing nucleoside triphosphate hydrolases"/>
    <property type="match status" value="1"/>
</dbReference>
<dbReference type="PROSITE" id="PS51206">
    <property type="entry name" value="SF3_HELICASE_1"/>
    <property type="match status" value="1"/>
</dbReference>